<protein>
    <recommendedName>
        <fullName evidence="1">UDP-N-acetylmuramoyl-L-alanyl-D-glutamate--2,6-diaminopimelate ligase</fullName>
        <ecNumber evidence="1">6.3.2.13</ecNumber>
    </recommendedName>
    <alternativeName>
        <fullName evidence="1">Meso-A2pm-adding enzyme</fullName>
    </alternativeName>
    <alternativeName>
        <fullName evidence="1">Meso-diaminopimelate-adding enzyme</fullName>
    </alternativeName>
    <alternativeName>
        <fullName evidence="1">UDP-MurNAc-L-Ala-D-Glu:meso-diaminopimelate ligase</fullName>
    </alternativeName>
    <alternativeName>
        <fullName evidence="1">UDP-MurNAc-tripeptide synthetase</fullName>
    </alternativeName>
    <alternativeName>
        <fullName evidence="1">UDP-N-acetylmuramyl-tripeptide synthetase</fullName>
    </alternativeName>
</protein>
<comment type="function">
    <text evidence="1">Catalyzes the addition of meso-diaminopimelic acid to the nucleotide precursor UDP-N-acetylmuramoyl-L-alanyl-D-glutamate (UMAG) in the biosynthesis of bacterial cell-wall peptidoglycan.</text>
</comment>
<comment type="catalytic activity">
    <reaction evidence="1">
        <text>UDP-N-acetyl-alpha-D-muramoyl-L-alanyl-D-glutamate + meso-2,6-diaminopimelate + ATP = UDP-N-acetyl-alpha-D-muramoyl-L-alanyl-gamma-D-glutamyl-meso-2,6-diaminopimelate + ADP + phosphate + H(+)</text>
        <dbReference type="Rhea" id="RHEA:23676"/>
        <dbReference type="ChEBI" id="CHEBI:15378"/>
        <dbReference type="ChEBI" id="CHEBI:30616"/>
        <dbReference type="ChEBI" id="CHEBI:43474"/>
        <dbReference type="ChEBI" id="CHEBI:57791"/>
        <dbReference type="ChEBI" id="CHEBI:83900"/>
        <dbReference type="ChEBI" id="CHEBI:83905"/>
        <dbReference type="ChEBI" id="CHEBI:456216"/>
        <dbReference type="EC" id="6.3.2.13"/>
    </reaction>
</comment>
<comment type="cofactor">
    <cofactor evidence="1">
        <name>Mg(2+)</name>
        <dbReference type="ChEBI" id="CHEBI:18420"/>
    </cofactor>
</comment>
<comment type="pathway">
    <text evidence="1">Cell wall biogenesis; peptidoglycan biosynthesis.</text>
</comment>
<comment type="subcellular location">
    <subcellularLocation>
        <location evidence="1">Cytoplasm</location>
    </subcellularLocation>
</comment>
<comment type="PTM">
    <text evidence="1">Carboxylation is probably crucial for Mg(2+) binding and, consequently, for the gamma-phosphate positioning of ATP.</text>
</comment>
<comment type="similarity">
    <text evidence="1">Belongs to the MurCDEF family. MurE subfamily.</text>
</comment>
<sequence>MADRNLRDLLAPWVQDAPACALREMILDSRVAAAGDLFVAIVGHKADGRRYIPQAIAQGVAAIVAEADGEAADGTVREMHGVPVVYLSSLNQRLSALAGRFYQQPAEKLQLIGVTGTNGKTTTTQLLAQWSQALGEMSAVMGTVGNGLLGRAIPTENTTGSAVDVQQVLSQLVEQGATFAAMEVSSHGLVQNRVAALPFTAAVFTNLSRDHLDYHGDMESYEAAKWLLFAEHRVGQMIINADDEVGLRWLAKLPDAVAVTMENNLVPGCRGRWLKATQIDYHDNGATIAFDSSWGQGEIESRLMGAFNVSNMLLALATLLSLGYPLDKLVIAGSQLQPVCGRMEVFHAEGKPTVVVDYAHTPDALEKALEAARLHCQGKLWCVFGCGGDRDKGKRPLMGGIAEQLADRVVVTDDNPRSEEPQAIVADILSGLLDAGRVQVIHGRAEAVTSAIMQAQENDVVLVAGKGHEDYQLVGNQRLDYSDRITVARLLGVIA</sequence>
<feature type="chain" id="PRO_1000012351" description="UDP-N-acetylmuramoyl-L-alanyl-D-glutamate--2,6-diaminopimelate ligase">
    <location>
        <begin position="1"/>
        <end position="495"/>
    </location>
</feature>
<feature type="short sequence motif" description="Meso-diaminopimelate recognition motif">
    <location>
        <begin position="414"/>
        <end position="417"/>
    </location>
</feature>
<feature type="binding site" evidence="1">
    <location>
        <position position="27"/>
    </location>
    <ligand>
        <name>UDP-N-acetyl-alpha-D-muramoyl-L-alanyl-D-glutamate</name>
        <dbReference type="ChEBI" id="CHEBI:83900"/>
    </ligand>
</feature>
<feature type="binding site" evidence="1">
    <location>
        <position position="29"/>
    </location>
    <ligand>
        <name>UDP-N-acetyl-alpha-D-muramoyl-L-alanyl-D-glutamate</name>
        <dbReference type="ChEBI" id="CHEBI:83900"/>
    </ligand>
</feature>
<feature type="binding site" evidence="1">
    <location>
        <begin position="44"/>
        <end position="46"/>
    </location>
    <ligand>
        <name>UDP-N-acetyl-alpha-D-muramoyl-L-alanyl-D-glutamate</name>
        <dbReference type="ChEBI" id="CHEBI:83900"/>
    </ligand>
</feature>
<feature type="binding site" evidence="1">
    <location>
        <begin position="116"/>
        <end position="122"/>
    </location>
    <ligand>
        <name>ATP</name>
        <dbReference type="ChEBI" id="CHEBI:30616"/>
    </ligand>
</feature>
<feature type="binding site" evidence="1">
    <location>
        <position position="157"/>
    </location>
    <ligand>
        <name>UDP-N-acetyl-alpha-D-muramoyl-L-alanyl-D-glutamate</name>
        <dbReference type="ChEBI" id="CHEBI:83900"/>
    </ligand>
</feature>
<feature type="binding site" evidence="1">
    <location>
        <begin position="158"/>
        <end position="159"/>
    </location>
    <ligand>
        <name>UDP-N-acetyl-alpha-D-muramoyl-L-alanyl-D-glutamate</name>
        <dbReference type="ChEBI" id="CHEBI:83900"/>
    </ligand>
</feature>
<feature type="binding site" evidence="1">
    <location>
        <position position="185"/>
    </location>
    <ligand>
        <name>UDP-N-acetyl-alpha-D-muramoyl-L-alanyl-D-glutamate</name>
        <dbReference type="ChEBI" id="CHEBI:83900"/>
    </ligand>
</feature>
<feature type="binding site" evidence="1">
    <location>
        <position position="191"/>
    </location>
    <ligand>
        <name>UDP-N-acetyl-alpha-D-muramoyl-L-alanyl-D-glutamate</name>
        <dbReference type="ChEBI" id="CHEBI:83900"/>
    </ligand>
</feature>
<feature type="binding site" evidence="1">
    <location>
        <position position="193"/>
    </location>
    <ligand>
        <name>UDP-N-acetyl-alpha-D-muramoyl-L-alanyl-D-glutamate</name>
        <dbReference type="ChEBI" id="CHEBI:83900"/>
    </ligand>
</feature>
<feature type="binding site" evidence="1">
    <location>
        <position position="390"/>
    </location>
    <ligand>
        <name>meso-2,6-diaminopimelate</name>
        <dbReference type="ChEBI" id="CHEBI:57791"/>
    </ligand>
</feature>
<feature type="binding site" evidence="1">
    <location>
        <begin position="414"/>
        <end position="417"/>
    </location>
    <ligand>
        <name>meso-2,6-diaminopimelate</name>
        <dbReference type="ChEBI" id="CHEBI:57791"/>
    </ligand>
</feature>
<feature type="binding site" evidence="1">
    <location>
        <position position="465"/>
    </location>
    <ligand>
        <name>meso-2,6-diaminopimelate</name>
        <dbReference type="ChEBI" id="CHEBI:57791"/>
    </ligand>
</feature>
<feature type="binding site" evidence="1">
    <location>
        <position position="469"/>
    </location>
    <ligand>
        <name>meso-2,6-diaminopimelate</name>
        <dbReference type="ChEBI" id="CHEBI:57791"/>
    </ligand>
</feature>
<feature type="modified residue" description="N6-carboxylysine" evidence="1">
    <location>
        <position position="225"/>
    </location>
</feature>
<keyword id="KW-0067">ATP-binding</keyword>
<keyword id="KW-0131">Cell cycle</keyword>
<keyword id="KW-0132">Cell division</keyword>
<keyword id="KW-0133">Cell shape</keyword>
<keyword id="KW-0961">Cell wall biogenesis/degradation</keyword>
<keyword id="KW-0963">Cytoplasm</keyword>
<keyword id="KW-0436">Ligase</keyword>
<keyword id="KW-0460">Magnesium</keyword>
<keyword id="KW-0547">Nucleotide-binding</keyword>
<keyword id="KW-0573">Peptidoglycan synthesis</keyword>
<keyword id="KW-1185">Reference proteome</keyword>
<evidence type="ECO:0000255" key="1">
    <source>
        <dbReference type="HAMAP-Rule" id="MF_00208"/>
    </source>
</evidence>
<dbReference type="EC" id="6.3.2.13" evidence="1"/>
<dbReference type="EMBL" id="BX950851">
    <property type="protein sequence ID" value="CAG76719.1"/>
    <property type="molecule type" value="Genomic_DNA"/>
</dbReference>
<dbReference type="RefSeq" id="WP_011095319.1">
    <property type="nucleotide sequence ID" value="NC_004547.2"/>
</dbReference>
<dbReference type="SMR" id="Q6D0H8"/>
<dbReference type="STRING" id="218491.ECA3820"/>
<dbReference type="GeneID" id="57210439"/>
<dbReference type="KEGG" id="eca:ECA3820"/>
<dbReference type="PATRIC" id="fig|218491.5.peg.3875"/>
<dbReference type="eggNOG" id="COG0769">
    <property type="taxonomic scope" value="Bacteria"/>
</dbReference>
<dbReference type="HOGENOM" id="CLU_022291_3_2_6"/>
<dbReference type="OrthoDB" id="9800958at2"/>
<dbReference type="UniPathway" id="UPA00219"/>
<dbReference type="Proteomes" id="UP000007966">
    <property type="component" value="Chromosome"/>
</dbReference>
<dbReference type="GO" id="GO:0005737">
    <property type="term" value="C:cytoplasm"/>
    <property type="evidence" value="ECO:0007669"/>
    <property type="project" value="UniProtKB-SubCell"/>
</dbReference>
<dbReference type="GO" id="GO:0005524">
    <property type="term" value="F:ATP binding"/>
    <property type="evidence" value="ECO:0007669"/>
    <property type="project" value="UniProtKB-UniRule"/>
</dbReference>
<dbReference type="GO" id="GO:0000287">
    <property type="term" value="F:magnesium ion binding"/>
    <property type="evidence" value="ECO:0007669"/>
    <property type="project" value="UniProtKB-UniRule"/>
</dbReference>
<dbReference type="GO" id="GO:0008765">
    <property type="term" value="F:UDP-N-acetylmuramoylalanyl-D-glutamate-2,6-diaminopimelate ligase activity"/>
    <property type="evidence" value="ECO:0007669"/>
    <property type="project" value="UniProtKB-UniRule"/>
</dbReference>
<dbReference type="GO" id="GO:0051301">
    <property type="term" value="P:cell division"/>
    <property type="evidence" value="ECO:0007669"/>
    <property type="project" value="UniProtKB-KW"/>
</dbReference>
<dbReference type="GO" id="GO:0071555">
    <property type="term" value="P:cell wall organization"/>
    <property type="evidence" value="ECO:0007669"/>
    <property type="project" value="UniProtKB-KW"/>
</dbReference>
<dbReference type="GO" id="GO:0009252">
    <property type="term" value="P:peptidoglycan biosynthetic process"/>
    <property type="evidence" value="ECO:0007669"/>
    <property type="project" value="UniProtKB-UniRule"/>
</dbReference>
<dbReference type="GO" id="GO:0008360">
    <property type="term" value="P:regulation of cell shape"/>
    <property type="evidence" value="ECO:0007669"/>
    <property type="project" value="UniProtKB-KW"/>
</dbReference>
<dbReference type="FunFam" id="3.40.1190.10:FF:000006">
    <property type="entry name" value="UDP-N-acetylmuramoyl-L-alanyl-D-glutamate--2,6-diaminopimelate ligase"/>
    <property type="match status" value="1"/>
</dbReference>
<dbReference type="FunFam" id="3.90.190.20:FF:000006">
    <property type="entry name" value="UDP-N-acetylmuramoyl-L-alanyl-D-glutamate--2,6-diaminopimelate ligase"/>
    <property type="match status" value="1"/>
</dbReference>
<dbReference type="Gene3D" id="3.90.190.20">
    <property type="entry name" value="Mur ligase, C-terminal domain"/>
    <property type="match status" value="1"/>
</dbReference>
<dbReference type="Gene3D" id="3.40.1190.10">
    <property type="entry name" value="Mur-like, catalytic domain"/>
    <property type="match status" value="1"/>
</dbReference>
<dbReference type="Gene3D" id="3.40.1390.10">
    <property type="entry name" value="MurE/MurF, N-terminal domain"/>
    <property type="match status" value="1"/>
</dbReference>
<dbReference type="HAMAP" id="MF_00208">
    <property type="entry name" value="MurE"/>
    <property type="match status" value="1"/>
</dbReference>
<dbReference type="InterPro" id="IPR036565">
    <property type="entry name" value="Mur-like_cat_sf"/>
</dbReference>
<dbReference type="InterPro" id="IPR004101">
    <property type="entry name" value="Mur_ligase_C"/>
</dbReference>
<dbReference type="InterPro" id="IPR036615">
    <property type="entry name" value="Mur_ligase_C_dom_sf"/>
</dbReference>
<dbReference type="InterPro" id="IPR013221">
    <property type="entry name" value="Mur_ligase_cen"/>
</dbReference>
<dbReference type="InterPro" id="IPR000713">
    <property type="entry name" value="Mur_ligase_N"/>
</dbReference>
<dbReference type="InterPro" id="IPR035911">
    <property type="entry name" value="MurE/MurF_N"/>
</dbReference>
<dbReference type="InterPro" id="IPR005761">
    <property type="entry name" value="UDP-N-AcMur-Glu-dNH2Pim_ligase"/>
</dbReference>
<dbReference type="NCBIfam" id="TIGR01085">
    <property type="entry name" value="murE"/>
    <property type="match status" value="1"/>
</dbReference>
<dbReference type="NCBIfam" id="NF001123">
    <property type="entry name" value="PRK00139.1-1"/>
    <property type="match status" value="1"/>
</dbReference>
<dbReference type="NCBIfam" id="NF001124">
    <property type="entry name" value="PRK00139.1-2"/>
    <property type="match status" value="1"/>
</dbReference>
<dbReference type="NCBIfam" id="NF001126">
    <property type="entry name" value="PRK00139.1-4"/>
    <property type="match status" value="1"/>
</dbReference>
<dbReference type="PANTHER" id="PTHR23135">
    <property type="entry name" value="MUR LIGASE FAMILY MEMBER"/>
    <property type="match status" value="1"/>
</dbReference>
<dbReference type="PANTHER" id="PTHR23135:SF4">
    <property type="entry name" value="UDP-N-ACETYLMURAMOYL-L-ALANYL-D-GLUTAMATE--2,6-DIAMINOPIMELATE LIGASE MURE HOMOLOG, CHLOROPLASTIC"/>
    <property type="match status" value="1"/>
</dbReference>
<dbReference type="Pfam" id="PF01225">
    <property type="entry name" value="Mur_ligase"/>
    <property type="match status" value="1"/>
</dbReference>
<dbReference type="Pfam" id="PF02875">
    <property type="entry name" value="Mur_ligase_C"/>
    <property type="match status" value="1"/>
</dbReference>
<dbReference type="Pfam" id="PF08245">
    <property type="entry name" value="Mur_ligase_M"/>
    <property type="match status" value="1"/>
</dbReference>
<dbReference type="SUPFAM" id="SSF53623">
    <property type="entry name" value="MurD-like peptide ligases, catalytic domain"/>
    <property type="match status" value="1"/>
</dbReference>
<dbReference type="SUPFAM" id="SSF53244">
    <property type="entry name" value="MurD-like peptide ligases, peptide-binding domain"/>
    <property type="match status" value="1"/>
</dbReference>
<dbReference type="SUPFAM" id="SSF63418">
    <property type="entry name" value="MurE/MurF N-terminal domain"/>
    <property type="match status" value="1"/>
</dbReference>
<reference key="1">
    <citation type="journal article" date="2004" name="Proc. Natl. Acad. Sci. U.S.A.">
        <title>Genome sequence of the enterobacterial phytopathogen Erwinia carotovora subsp. atroseptica and characterization of virulence factors.</title>
        <authorList>
            <person name="Bell K.S."/>
            <person name="Sebaihia M."/>
            <person name="Pritchard L."/>
            <person name="Holden M.T.G."/>
            <person name="Hyman L.J."/>
            <person name="Holeva M.C."/>
            <person name="Thomson N.R."/>
            <person name="Bentley S.D."/>
            <person name="Churcher L.J.C."/>
            <person name="Mungall K."/>
            <person name="Atkin R."/>
            <person name="Bason N."/>
            <person name="Brooks K."/>
            <person name="Chillingworth T."/>
            <person name="Clark K."/>
            <person name="Doggett J."/>
            <person name="Fraser A."/>
            <person name="Hance Z."/>
            <person name="Hauser H."/>
            <person name="Jagels K."/>
            <person name="Moule S."/>
            <person name="Norbertczak H."/>
            <person name="Ormond D."/>
            <person name="Price C."/>
            <person name="Quail M.A."/>
            <person name="Sanders M."/>
            <person name="Walker D."/>
            <person name="Whitehead S."/>
            <person name="Salmond G.P.C."/>
            <person name="Birch P.R.J."/>
            <person name="Parkhill J."/>
            <person name="Toth I.K."/>
        </authorList>
    </citation>
    <scope>NUCLEOTIDE SEQUENCE [LARGE SCALE GENOMIC DNA]</scope>
    <source>
        <strain>SCRI 1043 / ATCC BAA-672</strain>
    </source>
</reference>
<name>MURE_PECAS</name>
<gene>
    <name evidence="1" type="primary">murE</name>
    <name type="ordered locus">ECA3820</name>
</gene>
<proteinExistence type="inferred from homology"/>
<organism>
    <name type="scientific">Pectobacterium atrosepticum (strain SCRI 1043 / ATCC BAA-672)</name>
    <name type="common">Erwinia carotovora subsp. atroseptica</name>
    <dbReference type="NCBI Taxonomy" id="218491"/>
    <lineage>
        <taxon>Bacteria</taxon>
        <taxon>Pseudomonadati</taxon>
        <taxon>Pseudomonadota</taxon>
        <taxon>Gammaproteobacteria</taxon>
        <taxon>Enterobacterales</taxon>
        <taxon>Pectobacteriaceae</taxon>
        <taxon>Pectobacterium</taxon>
    </lineage>
</organism>
<accession>Q6D0H8</accession>